<sequence length="102" mass="11486">MAGQKIRIRLKAYDHEVIDSSAKKIVETVTRTGAKVAGPVPLPTEKNVYCVIRSPHNDKDSREHFEMRTHKRLIDIIDPTPKTVDSLMRLDLPAGVDISIKL</sequence>
<organism>
    <name type="scientific">Planobispora rosea</name>
    <dbReference type="NCBI Taxonomy" id="35762"/>
    <lineage>
        <taxon>Bacteria</taxon>
        <taxon>Bacillati</taxon>
        <taxon>Actinomycetota</taxon>
        <taxon>Actinomycetes</taxon>
        <taxon>Streptosporangiales</taxon>
        <taxon>Streptosporangiaceae</taxon>
        <taxon>Planobispora</taxon>
    </lineage>
</organism>
<feature type="chain" id="PRO_0000146572" description="Small ribosomal subunit protein uS10">
    <location>
        <begin position="1"/>
        <end position="102"/>
    </location>
</feature>
<accession>P72232</accession>
<proteinExistence type="inferred from homology"/>
<dbReference type="EMBL" id="X98830">
    <property type="protein sequence ID" value="CAA67346.1"/>
    <property type="molecule type" value="Genomic_DNA"/>
</dbReference>
<dbReference type="PIR" id="S72629">
    <property type="entry name" value="S72629"/>
</dbReference>
<dbReference type="SMR" id="P72232"/>
<dbReference type="GO" id="GO:1990904">
    <property type="term" value="C:ribonucleoprotein complex"/>
    <property type="evidence" value="ECO:0007669"/>
    <property type="project" value="UniProtKB-KW"/>
</dbReference>
<dbReference type="GO" id="GO:0005840">
    <property type="term" value="C:ribosome"/>
    <property type="evidence" value="ECO:0007669"/>
    <property type="project" value="UniProtKB-KW"/>
</dbReference>
<dbReference type="GO" id="GO:0003735">
    <property type="term" value="F:structural constituent of ribosome"/>
    <property type="evidence" value="ECO:0007669"/>
    <property type="project" value="InterPro"/>
</dbReference>
<dbReference type="GO" id="GO:0000049">
    <property type="term" value="F:tRNA binding"/>
    <property type="evidence" value="ECO:0007669"/>
    <property type="project" value="UniProtKB-UniRule"/>
</dbReference>
<dbReference type="GO" id="GO:0006412">
    <property type="term" value="P:translation"/>
    <property type="evidence" value="ECO:0007669"/>
    <property type="project" value="UniProtKB-UniRule"/>
</dbReference>
<dbReference type="FunFam" id="3.30.70.600:FF:000001">
    <property type="entry name" value="30S ribosomal protein S10"/>
    <property type="match status" value="1"/>
</dbReference>
<dbReference type="Gene3D" id="3.30.70.600">
    <property type="entry name" value="Ribosomal protein S10 domain"/>
    <property type="match status" value="1"/>
</dbReference>
<dbReference type="HAMAP" id="MF_00508">
    <property type="entry name" value="Ribosomal_uS10"/>
    <property type="match status" value="1"/>
</dbReference>
<dbReference type="InterPro" id="IPR001848">
    <property type="entry name" value="Ribosomal_uS10"/>
</dbReference>
<dbReference type="InterPro" id="IPR018268">
    <property type="entry name" value="Ribosomal_uS10_CS"/>
</dbReference>
<dbReference type="InterPro" id="IPR027486">
    <property type="entry name" value="Ribosomal_uS10_dom"/>
</dbReference>
<dbReference type="InterPro" id="IPR036838">
    <property type="entry name" value="Ribosomal_uS10_dom_sf"/>
</dbReference>
<dbReference type="NCBIfam" id="NF001861">
    <property type="entry name" value="PRK00596.1"/>
    <property type="match status" value="1"/>
</dbReference>
<dbReference type="NCBIfam" id="TIGR01049">
    <property type="entry name" value="rpsJ_bact"/>
    <property type="match status" value="1"/>
</dbReference>
<dbReference type="PANTHER" id="PTHR11700">
    <property type="entry name" value="30S RIBOSOMAL PROTEIN S10 FAMILY MEMBER"/>
    <property type="match status" value="1"/>
</dbReference>
<dbReference type="Pfam" id="PF00338">
    <property type="entry name" value="Ribosomal_S10"/>
    <property type="match status" value="1"/>
</dbReference>
<dbReference type="PRINTS" id="PR00971">
    <property type="entry name" value="RIBOSOMALS10"/>
</dbReference>
<dbReference type="SMART" id="SM01403">
    <property type="entry name" value="Ribosomal_S10"/>
    <property type="match status" value="1"/>
</dbReference>
<dbReference type="SUPFAM" id="SSF54999">
    <property type="entry name" value="Ribosomal protein S10"/>
    <property type="match status" value="1"/>
</dbReference>
<dbReference type="PROSITE" id="PS00361">
    <property type="entry name" value="RIBOSOMAL_S10"/>
    <property type="match status" value="1"/>
</dbReference>
<evidence type="ECO:0000255" key="1">
    <source>
        <dbReference type="HAMAP-Rule" id="MF_00508"/>
    </source>
</evidence>
<evidence type="ECO:0000305" key="2"/>
<name>RS10_PLARO</name>
<keyword id="KW-0687">Ribonucleoprotein</keyword>
<keyword id="KW-0689">Ribosomal protein</keyword>
<comment type="function">
    <text evidence="1">Involved in the binding of tRNA to the ribosomes.</text>
</comment>
<comment type="subunit">
    <text evidence="1">Part of the 30S ribosomal subunit.</text>
</comment>
<comment type="similarity">
    <text evidence="1">Belongs to the universal ribosomal protein uS10 family.</text>
</comment>
<protein>
    <recommendedName>
        <fullName evidence="1">Small ribosomal subunit protein uS10</fullName>
    </recommendedName>
    <alternativeName>
        <fullName evidence="2">30S ribosomal protein S10</fullName>
    </alternativeName>
</protein>
<gene>
    <name evidence="1" type="primary">rpsJ</name>
</gene>
<reference key="1">
    <citation type="journal article" date="1996" name="Mol. Microbiol.">
        <title>An elongation factor Tu (EF-Tu) resistant to the EF-Tu inhibitor GE2270 in the producing organism Planobispora rosea.</title>
        <authorList>
            <person name="Sosio M."/>
            <person name="Amati G."/>
            <person name="Cappellano C."/>
            <person name="Sarubbi E."/>
            <person name="Monti F."/>
            <person name="Donadio S."/>
        </authorList>
    </citation>
    <scope>NUCLEOTIDE SEQUENCE [GENOMIC DNA]</scope>
    <source>
        <strain>ATCC 53773 / GE2270</strain>
    </source>
</reference>